<protein>
    <recommendedName>
        <fullName evidence="1">Photosystem II protein D1 3</fullName>
        <shortName evidence="1">PSII D1 protein 3</shortName>
        <ecNumber evidence="1">1.10.3.9</ecNumber>
    </recommendedName>
    <alternativeName>
        <fullName evidence="1">Photosystem II Q(B) protein 3</fullName>
    </alternativeName>
</protein>
<evidence type="ECO:0000255" key="1">
    <source>
        <dbReference type="HAMAP-Rule" id="MF_01379"/>
    </source>
</evidence>
<evidence type="ECO:0000305" key="2"/>
<gene>
    <name evidence="1 2" type="primary">psbA3</name>
    <name type="synonym">psbA4</name>
    <name type="ordered locus">SYNW1919</name>
</gene>
<sequence>MTTTLQQRSGASSWQAFCEWVTSTNNRLYVGWFGVLMIPTLLAATICFVIAFVAAPPVDIDGIREPVAGSLIYGNNIISGAVVPSSNAIGLHFYPIWEAASLDEWLYNGGPFQLVVFHFLIGIYAYMGREWELSYRLGMRPWICVAYSAPVAAASAVFLVYPFGQGSFSDAMPLGISGTFNYMLVFQAEHNILMHPFHMLGVAGVFGGSLFSAMHGSLVTSSLVRETTETESQNYGYKFGQEEETYNIVAAHGYFGRLIFQYASFNNSRSLHFFLAAWPVVGIWFTALGVSTMAFNLNGFNFNQSILDGQGRVLNTWADVLNRAGLGMEVMHERNAHNFPLDLAAAESTPVALQVPAIG</sequence>
<proteinExistence type="inferred from homology"/>
<comment type="function">
    <text evidence="1">Photosystem II (PSII) is a light-driven water:plastoquinone oxidoreductase that uses light energy to abstract electrons from H(2)O, generating O(2) and a proton gradient subsequently used for ATP formation. It consists of a core antenna complex that captures photons, and an electron transfer chain that converts photonic excitation into a charge separation. The D1/D2 (PsbA/PsbD) reaction center heterodimer binds P680, the primary electron donor of PSII as well as several subsequent electron acceptors.</text>
</comment>
<comment type="catalytic activity">
    <reaction evidence="1">
        <text>2 a plastoquinone + 4 hnu + 2 H2O = 2 a plastoquinol + O2</text>
        <dbReference type="Rhea" id="RHEA:36359"/>
        <dbReference type="Rhea" id="RHEA-COMP:9561"/>
        <dbReference type="Rhea" id="RHEA-COMP:9562"/>
        <dbReference type="ChEBI" id="CHEBI:15377"/>
        <dbReference type="ChEBI" id="CHEBI:15379"/>
        <dbReference type="ChEBI" id="CHEBI:17757"/>
        <dbReference type="ChEBI" id="CHEBI:30212"/>
        <dbReference type="ChEBI" id="CHEBI:62192"/>
        <dbReference type="EC" id="1.10.3.9"/>
    </reaction>
</comment>
<comment type="cofactor">
    <text evidence="1">The D1/D2 heterodimer binds P680, chlorophylls that are the primary electron donor of PSII, and subsequent electron acceptors. It shares a non-heme iron and each subunit binds pheophytin, quinone, additional chlorophylls, carotenoids and lipids. D1 provides most of the ligands for the Mn4-Ca-O5 cluster of the oxygen-evolving complex (OEC). There is also a Cl(-1) ion associated with D1 and D2, which is required for oxygen evolution. The PSII complex binds additional chlorophylls, carotenoids and specific lipids.</text>
</comment>
<comment type="subunit">
    <text evidence="1">PSII is composed of 1 copy each of membrane proteins PsbA, PsbB, PsbC, PsbD, PsbE, PsbF, PsbH, PsbI, PsbJ, PsbK, PsbL, PsbM, PsbT, PsbX, PsbY, PsbZ, Psb30/Ycf12, peripheral proteins PsbO, CyanoQ (PsbQ), PsbU, PsbV and a large number of cofactors. It forms dimeric complexes.</text>
</comment>
<comment type="subcellular location">
    <subcellularLocation>
        <location evidence="1">Cellular thylakoid membrane</location>
        <topology evidence="1">Multi-pass membrane protein</topology>
    </subcellularLocation>
</comment>
<comment type="PTM">
    <text evidence="1">Tyr-161 forms a radical intermediate that is referred to as redox-active TyrZ, YZ or Y-Z.</text>
</comment>
<comment type="PTM">
    <text evidence="1">C-terminally processed by CtpA; processing is essential to allow assembly of the oxygen-evolving complex and thus photosynthetic growth.</text>
</comment>
<comment type="miscellaneous">
    <text evidence="1">Cyanobacteria usually contain more than 2 copies of the psbA gene.</text>
</comment>
<comment type="miscellaneous">
    <text evidence="1">2 of the reaction center chlorophylls (ChlD1 and ChlD2) are entirely coordinated by water.</text>
</comment>
<comment type="miscellaneous">
    <text evidence="1">Herbicides such as atrazine, BNT, diuron or ioxynil bind in the Q(B) binding site and block subsequent electron transfer.</text>
</comment>
<comment type="similarity">
    <text evidence="1">Belongs to the reaction center PufL/M/PsbA/D family.</text>
</comment>
<keyword id="KW-0106">Calcium</keyword>
<keyword id="KW-0148">Chlorophyll</keyword>
<keyword id="KW-0157">Chromophore</keyword>
<keyword id="KW-0249">Electron transport</keyword>
<keyword id="KW-0359">Herbicide resistance</keyword>
<keyword id="KW-0408">Iron</keyword>
<keyword id="KW-0460">Magnesium</keyword>
<keyword id="KW-0464">Manganese</keyword>
<keyword id="KW-0472">Membrane</keyword>
<keyword id="KW-0479">Metal-binding</keyword>
<keyword id="KW-0560">Oxidoreductase</keyword>
<keyword id="KW-0602">Photosynthesis</keyword>
<keyword id="KW-0604">Photosystem II</keyword>
<keyword id="KW-0793">Thylakoid</keyword>
<keyword id="KW-0812">Transmembrane</keyword>
<keyword id="KW-1133">Transmembrane helix</keyword>
<keyword id="KW-0813">Transport</keyword>
<organism>
    <name type="scientific">Parasynechococcus marenigrum (strain WH8102)</name>
    <dbReference type="NCBI Taxonomy" id="84588"/>
    <lineage>
        <taxon>Bacteria</taxon>
        <taxon>Bacillati</taxon>
        <taxon>Cyanobacteriota</taxon>
        <taxon>Cyanophyceae</taxon>
        <taxon>Synechococcales</taxon>
        <taxon>Prochlorococcaceae</taxon>
        <taxon>Parasynechococcus</taxon>
        <taxon>Parasynechococcus marenigrum</taxon>
    </lineage>
</organism>
<reference key="1">
    <citation type="journal article" date="2003" name="Nature">
        <title>The genome of a motile marine Synechococcus.</title>
        <authorList>
            <person name="Palenik B."/>
            <person name="Brahamsha B."/>
            <person name="Larimer F.W."/>
            <person name="Land M.L."/>
            <person name="Hauser L."/>
            <person name="Chain P."/>
            <person name="Lamerdin J.E."/>
            <person name="Regala W."/>
            <person name="Allen E.E."/>
            <person name="McCarren J."/>
            <person name="Paulsen I.T."/>
            <person name="Dufresne A."/>
            <person name="Partensky F."/>
            <person name="Webb E.A."/>
            <person name="Waterbury J."/>
        </authorList>
    </citation>
    <scope>NUCLEOTIDE SEQUENCE [LARGE SCALE GENOMIC DNA]</scope>
    <source>
        <strain>WH8102</strain>
    </source>
</reference>
<feature type="chain" id="PRO_0000316424" description="Photosystem II protein D1 3" evidence="1">
    <location>
        <begin position="1"/>
        <end position="344"/>
    </location>
</feature>
<feature type="propeptide" id="PRO_0000316425" evidence="1">
    <location>
        <begin position="345"/>
        <end position="359"/>
    </location>
</feature>
<feature type="transmembrane region" description="Helical" evidence="1">
    <location>
        <begin position="29"/>
        <end position="46"/>
    </location>
</feature>
<feature type="transmembrane region" description="Helical" evidence="1">
    <location>
        <begin position="118"/>
        <end position="133"/>
    </location>
</feature>
<feature type="transmembrane region" description="Helical" evidence="1">
    <location>
        <begin position="142"/>
        <end position="156"/>
    </location>
</feature>
<feature type="transmembrane region" description="Helical" evidence="1">
    <location>
        <begin position="197"/>
        <end position="218"/>
    </location>
</feature>
<feature type="transmembrane region" description="Helical" evidence="1">
    <location>
        <begin position="274"/>
        <end position="288"/>
    </location>
</feature>
<feature type="binding site" description="axial binding residue" evidence="1">
    <location>
        <position position="118"/>
    </location>
    <ligand>
        <name>chlorophyll a</name>
        <dbReference type="ChEBI" id="CHEBI:58416"/>
        <label>ChlzD1</label>
    </ligand>
    <ligandPart>
        <name>Mg</name>
        <dbReference type="ChEBI" id="CHEBI:25107"/>
    </ligandPart>
</feature>
<feature type="binding site" evidence="1">
    <location>
        <position position="126"/>
    </location>
    <ligand>
        <name>pheophytin a</name>
        <dbReference type="ChEBI" id="CHEBI:136840"/>
        <label>D1</label>
    </ligand>
</feature>
<feature type="binding site" evidence="1">
    <location>
        <position position="170"/>
    </location>
    <ligand>
        <name>[CaMn4O5] cluster</name>
        <dbReference type="ChEBI" id="CHEBI:189552"/>
    </ligand>
</feature>
<feature type="binding site" evidence="1">
    <location>
        <position position="189"/>
    </location>
    <ligand>
        <name>[CaMn4O5] cluster</name>
        <dbReference type="ChEBI" id="CHEBI:189552"/>
    </ligand>
</feature>
<feature type="binding site" description="axial binding residue" evidence="1">
    <location>
        <position position="198"/>
    </location>
    <ligand>
        <name>chlorophyll a</name>
        <dbReference type="ChEBI" id="CHEBI:58416"/>
        <label>PD1</label>
    </ligand>
    <ligandPart>
        <name>Mg</name>
        <dbReference type="ChEBI" id="CHEBI:25107"/>
    </ligandPart>
</feature>
<feature type="binding site" evidence="1">
    <location>
        <position position="215"/>
    </location>
    <ligand>
        <name>a quinone</name>
        <dbReference type="ChEBI" id="CHEBI:132124"/>
        <label>B</label>
    </ligand>
</feature>
<feature type="binding site" evidence="1">
    <location>
        <position position="215"/>
    </location>
    <ligand>
        <name>Fe cation</name>
        <dbReference type="ChEBI" id="CHEBI:24875"/>
        <note>ligand shared with heterodimeric partner</note>
    </ligand>
</feature>
<feature type="binding site" evidence="1">
    <location>
        <begin position="264"/>
        <end position="265"/>
    </location>
    <ligand>
        <name>a quinone</name>
        <dbReference type="ChEBI" id="CHEBI:132124"/>
        <label>B</label>
    </ligand>
</feature>
<feature type="binding site" evidence="1">
    <location>
        <position position="272"/>
    </location>
    <ligand>
        <name>Fe cation</name>
        <dbReference type="ChEBI" id="CHEBI:24875"/>
        <note>ligand shared with heterodimeric partner</note>
    </ligand>
</feature>
<feature type="binding site" evidence="1">
    <location>
        <position position="332"/>
    </location>
    <ligand>
        <name>[CaMn4O5] cluster</name>
        <dbReference type="ChEBI" id="CHEBI:189552"/>
    </ligand>
</feature>
<feature type="binding site" evidence="1">
    <location>
        <position position="333"/>
    </location>
    <ligand>
        <name>[CaMn4O5] cluster</name>
        <dbReference type="ChEBI" id="CHEBI:189552"/>
    </ligand>
</feature>
<feature type="binding site" evidence="1">
    <location>
        <position position="342"/>
    </location>
    <ligand>
        <name>[CaMn4O5] cluster</name>
        <dbReference type="ChEBI" id="CHEBI:189552"/>
    </ligand>
</feature>
<feature type="binding site" evidence="1">
    <location>
        <position position="344"/>
    </location>
    <ligand>
        <name>[CaMn4O5] cluster</name>
        <dbReference type="ChEBI" id="CHEBI:189552"/>
    </ligand>
</feature>
<feature type="site" description="Tyrosine radical intermediate" evidence="1">
    <location>
        <position position="161"/>
    </location>
</feature>
<feature type="site" description="Stabilizes free radical intermediate" evidence="1">
    <location>
        <position position="190"/>
    </location>
</feature>
<feature type="site" description="Cleavage; by CtpA" evidence="1">
    <location>
        <begin position="344"/>
        <end position="345"/>
    </location>
</feature>
<dbReference type="EC" id="1.10.3.9" evidence="1"/>
<dbReference type="EMBL" id="BX569694">
    <property type="protein sequence ID" value="CAE08434.1"/>
    <property type="molecule type" value="Genomic_DNA"/>
</dbReference>
<dbReference type="RefSeq" id="WP_011128777.1">
    <property type="nucleotide sequence ID" value="NC_005070.1"/>
</dbReference>
<dbReference type="SMR" id="Q7U4Z3"/>
<dbReference type="STRING" id="84588.SYNW1919"/>
<dbReference type="KEGG" id="syw:SYNW1919"/>
<dbReference type="eggNOG" id="ENOG502Z87P">
    <property type="taxonomic scope" value="Bacteria"/>
</dbReference>
<dbReference type="HOGENOM" id="CLU_054206_1_0_3"/>
<dbReference type="Proteomes" id="UP000001422">
    <property type="component" value="Chromosome"/>
</dbReference>
<dbReference type="GO" id="GO:0009523">
    <property type="term" value="C:photosystem II"/>
    <property type="evidence" value="ECO:0007669"/>
    <property type="project" value="UniProtKB-KW"/>
</dbReference>
<dbReference type="GO" id="GO:0031676">
    <property type="term" value="C:plasma membrane-derived thylakoid membrane"/>
    <property type="evidence" value="ECO:0007669"/>
    <property type="project" value="UniProtKB-SubCell"/>
</dbReference>
<dbReference type="GO" id="GO:0016168">
    <property type="term" value="F:chlorophyll binding"/>
    <property type="evidence" value="ECO:0007669"/>
    <property type="project" value="UniProtKB-UniRule"/>
</dbReference>
<dbReference type="GO" id="GO:0045156">
    <property type="term" value="F:electron transporter, transferring electrons within the cyclic electron transport pathway of photosynthesis activity"/>
    <property type="evidence" value="ECO:0007669"/>
    <property type="project" value="InterPro"/>
</dbReference>
<dbReference type="GO" id="GO:0005506">
    <property type="term" value="F:iron ion binding"/>
    <property type="evidence" value="ECO:0007669"/>
    <property type="project" value="UniProtKB-UniRule"/>
</dbReference>
<dbReference type="GO" id="GO:0016682">
    <property type="term" value="F:oxidoreductase activity, acting on diphenols and related substances as donors, oxygen as acceptor"/>
    <property type="evidence" value="ECO:0007669"/>
    <property type="project" value="UniProtKB-UniRule"/>
</dbReference>
<dbReference type="GO" id="GO:0010242">
    <property type="term" value="F:oxygen evolving activity"/>
    <property type="evidence" value="ECO:0007669"/>
    <property type="project" value="UniProtKB-EC"/>
</dbReference>
<dbReference type="GO" id="GO:0009772">
    <property type="term" value="P:photosynthetic electron transport in photosystem II"/>
    <property type="evidence" value="ECO:0007669"/>
    <property type="project" value="InterPro"/>
</dbReference>
<dbReference type="GO" id="GO:0009635">
    <property type="term" value="P:response to herbicide"/>
    <property type="evidence" value="ECO:0007669"/>
    <property type="project" value="UniProtKB-KW"/>
</dbReference>
<dbReference type="FunFam" id="1.20.85.10:FF:000002">
    <property type="entry name" value="Photosystem II protein D1"/>
    <property type="match status" value="1"/>
</dbReference>
<dbReference type="Gene3D" id="1.20.85.10">
    <property type="entry name" value="Photosystem II protein D1-like"/>
    <property type="match status" value="1"/>
</dbReference>
<dbReference type="HAMAP" id="MF_01379">
    <property type="entry name" value="PSII_PsbA_D1"/>
    <property type="match status" value="1"/>
</dbReference>
<dbReference type="InterPro" id="IPR055266">
    <property type="entry name" value="D1/D2"/>
</dbReference>
<dbReference type="InterPro" id="IPR036854">
    <property type="entry name" value="Photo_II_D1/D2_sf"/>
</dbReference>
<dbReference type="InterPro" id="IPR000484">
    <property type="entry name" value="Photo_RC_L/M"/>
</dbReference>
<dbReference type="InterPro" id="IPR055265">
    <property type="entry name" value="Photo_RC_L/M_CS"/>
</dbReference>
<dbReference type="InterPro" id="IPR005867">
    <property type="entry name" value="PSII_D1"/>
</dbReference>
<dbReference type="NCBIfam" id="TIGR01151">
    <property type="entry name" value="psbA"/>
    <property type="match status" value="1"/>
</dbReference>
<dbReference type="PANTHER" id="PTHR33149:SF12">
    <property type="entry name" value="PHOTOSYSTEM II D2 PROTEIN"/>
    <property type="match status" value="1"/>
</dbReference>
<dbReference type="PANTHER" id="PTHR33149">
    <property type="entry name" value="PHOTOSYSTEM II PROTEIN D1"/>
    <property type="match status" value="1"/>
</dbReference>
<dbReference type="Pfam" id="PF00124">
    <property type="entry name" value="Photo_RC"/>
    <property type="match status" value="1"/>
</dbReference>
<dbReference type="PRINTS" id="PR00256">
    <property type="entry name" value="REACTNCENTRE"/>
</dbReference>
<dbReference type="SUPFAM" id="SSF81483">
    <property type="entry name" value="Bacterial photosystem II reaction centre, L and M subunits"/>
    <property type="match status" value="1"/>
</dbReference>
<dbReference type="PROSITE" id="PS00244">
    <property type="entry name" value="REACTION_CENTER"/>
    <property type="match status" value="1"/>
</dbReference>
<name>PSBA3_PARMW</name>
<accession>Q7U4Z3</accession>